<reference key="1">
    <citation type="journal article" date="2005" name="J. Bacteriol.">
        <title>Insights on evolution of virulence and resistance from the complete genome analysis of an early methicillin-resistant Staphylococcus aureus strain and a biofilm-producing methicillin-resistant Staphylococcus epidermidis strain.</title>
        <authorList>
            <person name="Gill S.R."/>
            <person name="Fouts D.E."/>
            <person name="Archer G.L."/>
            <person name="Mongodin E.F."/>
            <person name="DeBoy R.T."/>
            <person name="Ravel J."/>
            <person name="Paulsen I.T."/>
            <person name="Kolonay J.F."/>
            <person name="Brinkac L.M."/>
            <person name="Beanan M.J."/>
            <person name="Dodson R.J."/>
            <person name="Daugherty S.C."/>
            <person name="Madupu R."/>
            <person name="Angiuoli S.V."/>
            <person name="Durkin A.S."/>
            <person name="Haft D.H."/>
            <person name="Vamathevan J.J."/>
            <person name="Khouri H."/>
            <person name="Utterback T.R."/>
            <person name="Lee C."/>
            <person name="Dimitrov G."/>
            <person name="Jiang L."/>
            <person name="Qin H."/>
            <person name="Weidman J."/>
            <person name="Tran K."/>
            <person name="Kang K.H."/>
            <person name="Hance I.R."/>
            <person name="Nelson K.E."/>
            <person name="Fraser C.M."/>
        </authorList>
    </citation>
    <scope>NUCLEOTIDE SEQUENCE [LARGE SCALE GENOMIC DNA]</scope>
    <source>
        <strain>ATCC 35984 / DSM 28319 / BCRC 17069 / CCUG 31568 / BM 3577 / RP62A</strain>
    </source>
</reference>
<accession>Q5HNW7</accession>
<sequence>MAKRDYYEVLGVNKSASKDEIKKAYRKLSKKYHPDINKEEGADEKFKEISEAYEVLSDENKRVNYDQFGHDGPQGGFGSQGFGGSDFGGFEDIFSSFFGGGSRQRDPNAPRKGDDLQYTMTITFEEAVFGTKKEISIKKDVTCHTCNGDGAKPGTSKKTCSYCNGAGRVSVEQNTILGRVRTEQVCPKCEGSGQEFEEPCPTCKGKGTENKTVKLEVTVPEGVDNEQQVRLAGEGSPGVNGGPHGDLYVVFRVKPSNTFERDGDDIYYNLDISFSQAALGDEIKIPTLKSNVVLTIPAGTQTGKQFRLKDKGVKNVHGYGYGDLFVNIKVVTPTKLNDRQKELLKEFAEINGENINEQSSNFKDRAKRFFKGE</sequence>
<organism>
    <name type="scientific">Staphylococcus epidermidis (strain ATCC 35984 / DSM 28319 / BCRC 17069 / CCUG 31568 / BM 3577 / RP62A)</name>
    <dbReference type="NCBI Taxonomy" id="176279"/>
    <lineage>
        <taxon>Bacteria</taxon>
        <taxon>Bacillati</taxon>
        <taxon>Bacillota</taxon>
        <taxon>Bacilli</taxon>
        <taxon>Bacillales</taxon>
        <taxon>Staphylococcaceae</taxon>
        <taxon>Staphylococcus</taxon>
    </lineage>
</organism>
<name>DNAJ_STAEQ</name>
<comment type="function">
    <text evidence="1">Participates actively in the response to hyperosmotic and heat shock by preventing the aggregation of stress-denatured proteins and by disaggregating proteins, also in an autonomous, DnaK-independent fashion. Unfolded proteins bind initially to DnaJ; upon interaction with the DnaJ-bound protein, DnaK hydrolyzes its bound ATP, resulting in the formation of a stable complex. GrpE releases ADP from DnaK; ATP binding to DnaK triggers the release of the substrate protein, thus completing the reaction cycle. Several rounds of ATP-dependent interactions between DnaJ, DnaK and GrpE are required for fully efficient folding. Also involved, together with DnaK and GrpE, in the DNA replication of plasmids through activation of initiation proteins.</text>
</comment>
<comment type="cofactor">
    <cofactor evidence="1">
        <name>Zn(2+)</name>
        <dbReference type="ChEBI" id="CHEBI:29105"/>
    </cofactor>
    <text evidence="1">Binds 2 Zn(2+) ions per monomer.</text>
</comment>
<comment type="subunit">
    <text evidence="1">Homodimer.</text>
</comment>
<comment type="subcellular location">
    <subcellularLocation>
        <location evidence="1">Cytoplasm</location>
    </subcellularLocation>
</comment>
<comment type="domain">
    <text evidence="1">The J domain is necessary and sufficient to stimulate DnaK ATPase activity. Zinc center 1 plays an important role in the autonomous, DnaK-independent chaperone activity of DnaJ. Zinc center 2 is essential for interaction with DnaK and for DnaJ activity.</text>
</comment>
<comment type="similarity">
    <text evidence="1">Belongs to the DnaJ family.</text>
</comment>
<protein>
    <recommendedName>
        <fullName evidence="1">Chaperone protein DnaJ</fullName>
    </recommendedName>
</protein>
<gene>
    <name evidence="1" type="primary">dnaJ</name>
    <name type="ordered locus">SERP1147</name>
</gene>
<keyword id="KW-0143">Chaperone</keyword>
<keyword id="KW-0963">Cytoplasm</keyword>
<keyword id="KW-0235">DNA replication</keyword>
<keyword id="KW-0479">Metal-binding</keyword>
<keyword id="KW-1185">Reference proteome</keyword>
<keyword id="KW-0677">Repeat</keyword>
<keyword id="KW-0346">Stress response</keyword>
<keyword id="KW-0862">Zinc</keyword>
<keyword id="KW-0863">Zinc-finger</keyword>
<feature type="chain" id="PRO_0000070890" description="Chaperone protein DnaJ">
    <location>
        <begin position="1"/>
        <end position="373"/>
    </location>
</feature>
<feature type="domain" description="J" evidence="1">
    <location>
        <begin position="5"/>
        <end position="69"/>
    </location>
</feature>
<feature type="repeat" description="CXXCXGXG motif">
    <location>
        <begin position="143"/>
        <end position="150"/>
    </location>
</feature>
<feature type="repeat" description="CXXCXGXG motif">
    <location>
        <begin position="160"/>
        <end position="167"/>
    </location>
</feature>
<feature type="repeat" description="CXXCXGXG motif">
    <location>
        <begin position="186"/>
        <end position="193"/>
    </location>
</feature>
<feature type="repeat" description="CXXCXGXG motif">
    <location>
        <begin position="200"/>
        <end position="207"/>
    </location>
</feature>
<feature type="zinc finger region" description="CR-type" evidence="1">
    <location>
        <begin position="130"/>
        <end position="212"/>
    </location>
</feature>
<feature type="binding site" evidence="1">
    <location>
        <position position="143"/>
    </location>
    <ligand>
        <name>Zn(2+)</name>
        <dbReference type="ChEBI" id="CHEBI:29105"/>
        <label>1</label>
    </ligand>
</feature>
<feature type="binding site" evidence="1">
    <location>
        <position position="146"/>
    </location>
    <ligand>
        <name>Zn(2+)</name>
        <dbReference type="ChEBI" id="CHEBI:29105"/>
        <label>1</label>
    </ligand>
</feature>
<feature type="binding site" evidence="1">
    <location>
        <position position="160"/>
    </location>
    <ligand>
        <name>Zn(2+)</name>
        <dbReference type="ChEBI" id="CHEBI:29105"/>
        <label>2</label>
    </ligand>
</feature>
<feature type="binding site" evidence="1">
    <location>
        <position position="163"/>
    </location>
    <ligand>
        <name>Zn(2+)</name>
        <dbReference type="ChEBI" id="CHEBI:29105"/>
        <label>2</label>
    </ligand>
</feature>
<feature type="binding site" evidence="1">
    <location>
        <position position="186"/>
    </location>
    <ligand>
        <name>Zn(2+)</name>
        <dbReference type="ChEBI" id="CHEBI:29105"/>
        <label>2</label>
    </ligand>
</feature>
<feature type="binding site" evidence="1">
    <location>
        <position position="189"/>
    </location>
    <ligand>
        <name>Zn(2+)</name>
        <dbReference type="ChEBI" id="CHEBI:29105"/>
        <label>2</label>
    </ligand>
</feature>
<feature type="binding site" evidence="1">
    <location>
        <position position="200"/>
    </location>
    <ligand>
        <name>Zn(2+)</name>
        <dbReference type="ChEBI" id="CHEBI:29105"/>
        <label>1</label>
    </ligand>
</feature>
<feature type="binding site" evidence="1">
    <location>
        <position position="203"/>
    </location>
    <ligand>
        <name>Zn(2+)</name>
        <dbReference type="ChEBI" id="CHEBI:29105"/>
        <label>1</label>
    </ligand>
</feature>
<evidence type="ECO:0000255" key="1">
    <source>
        <dbReference type="HAMAP-Rule" id="MF_01152"/>
    </source>
</evidence>
<dbReference type="EMBL" id="CP000029">
    <property type="protein sequence ID" value="AAW54482.1"/>
    <property type="molecule type" value="Genomic_DNA"/>
</dbReference>
<dbReference type="RefSeq" id="WP_002486236.1">
    <property type="nucleotide sequence ID" value="NC_002976.3"/>
</dbReference>
<dbReference type="SMR" id="Q5HNW7"/>
<dbReference type="STRING" id="176279.SERP1147"/>
<dbReference type="KEGG" id="ser:SERP1147"/>
<dbReference type="eggNOG" id="COG0484">
    <property type="taxonomic scope" value="Bacteria"/>
</dbReference>
<dbReference type="HOGENOM" id="CLU_017633_0_7_9"/>
<dbReference type="Proteomes" id="UP000000531">
    <property type="component" value="Chromosome"/>
</dbReference>
<dbReference type="GO" id="GO:0005737">
    <property type="term" value="C:cytoplasm"/>
    <property type="evidence" value="ECO:0007669"/>
    <property type="project" value="UniProtKB-SubCell"/>
</dbReference>
<dbReference type="GO" id="GO:0005524">
    <property type="term" value="F:ATP binding"/>
    <property type="evidence" value="ECO:0007669"/>
    <property type="project" value="InterPro"/>
</dbReference>
<dbReference type="GO" id="GO:0031072">
    <property type="term" value="F:heat shock protein binding"/>
    <property type="evidence" value="ECO:0007669"/>
    <property type="project" value="InterPro"/>
</dbReference>
<dbReference type="GO" id="GO:0051082">
    <property type="term" value="F:unfolded protein binding"/>
    <property type="evidence" value="ECO:0007669"/>
    <property type="project" value="UniProtKB-UniRule"/>
</dbReference>
<dbReference type="GO" id="GO:0008270">
    <property type="term" value="F:zinc ion binding"/>
    <property type="evidence" value="ECO:0007669"/>
    <property type="project" value="UniProtKB-UniRule"/>
</dbReference>
<dbReference type="GO" id="GO:0051085">
    <property type="term" value="P:chaperone cofactor-dependent protein refolding"/>
    <property type="evidence" value="ECO:0007669"/>
    <property type="project" value="TreeGrafter"/>
</dbReference>
<dbReference type="GO" id="GO:0006260">
    <property type="term" value="P:DNA replication"/>
    <property type="evidence" value="ECO:0007669"/>
    <property type="project" value="UniProtKB-KW"/>
</dbReference>
<dbReference type="GO" id="GO:0042026">
    <property type="term" value="P:protein refolding"/>
    <property type="evidence" value="ECO:0007669"/>
    <property type="project" value="TreeGrafter"/>
</dbReference>
<dbReference type="GO" id="GO:0009408">
    <property type="term" value="P:response to heat"/>
    <property type="evidence" value="ECO:0007669"/>
    <property type="project" value="InterPro"/>
</dbReference>
<dbReference type="CDD" id="cd06257">
    <property type="entry name" value="DnaJ"/>
    <property type="match status" value="1"/>
</dbReference>
<dbReference type="CDD" id="cd10747">
    <property type="entry name" value="DnaJ_C"/>
    <property type="match status" value="1"/>
</dbReference>
<dbReference type="CDD" id="cd10719">
    <property type="entry name" value="DnaJ_zf"/>
    <property type="match status" value="1"/>
</dbReference>
<dbReference type="FunFam" id="1.10.287.110:FF:000031">
    <property type="entry name" value="Molecular chaperone DnaJ"/>
    <property type="match status" value="1"/>
</dbReference>
<dbReference type="FunFam" id="2.10.230.10:FF:000002">
    <property type="entry name" value="Molecular chaperone DnaJ"/>
    <property type="match status" value="1"/>
</dbReference>
<dbReference type="FunFam" id="2.60.260.20:FF:000004">
    <property type="entry name" value="Molecular chaperone DnaJ"/>
    <property type="match status" value="1"/>
</dbReference>
<dbReference type="Gene3D" id="1.10.287.110">
    <property type="entry name" value="DnaJ domain"/>
    <property type="match status" value="1"/>
</dbReference>
<dbReference type="Gene3D" id="2.10.230.10">
    <property type="entry name" value="Heat shock protein DnaJ, cysteine-rich domain"/>
    <property type="match status" value="1"/>
</dbReference>
<dbReference type="Gene3D" id="2.60.260.20">
    <property type="entry name" value="Urease metallochaperone UreE, N-terminal domain"/>
    <property type="match status" value="2"/>
</dbReference>
<dbReference type="HAMAP" id="MF_01152">
    <property type="entry name" value="DnaJ"/>
    <property type="match status" value="1"/>
</dbReference>
<dbReference type="InterPro" id="IPR012724">
    <property type="entry name" value="DnaJ"/>
</dbReference>
<dbReference type="InterPro" id="IPR002939">
    <property type="entry name" value="DnaJ_C"/>
</dbReference>
<dbReference type="InterPro" id="IPR001623">
    <property type="entry name" value="DnaJ_domain"/>
</dbReference>
<dbReference type="InterPro" id="IPR018253">
    <property type="entry name" value="DnaJ_domain_CS"/>
</dbReference>
<dbReference type="InterPro" id="IPR008971">
    <property type="entry name" value="HSP40/DnaJ_pept-bd"/>
</dbReference>
<dbReference type="InterPro" id="IPR001305">
    <property type="entry name" value="HSP_DnaJ_Cys-rich_dom"/>
</dbReference>
<dbReference type="InterPro" id="IPR036410">
    <property type="entry name" value="HSP_DnaJ_Cys-rich_dom_sf"/>
</dbReference>
<dbReference type="InterPro" id="IPR036869">
    <property type="entry name" value="J_dom_sf"/>
</dbReference>
<dbReference type="NCBIfam" id="TIGR02349">
    <property type="entry name" value="DnaJ_bact"/>
    <property type="match status" value="1"/>
</dbReference>
<dbReference type="NCBIfam" id="NF008035">
    <property type="entry name" value="PRK10767.1"/>
    <property type="match status" value="1"/>
</dbReference>
<dbReference type="NCBIfam" id="NF010869">
    <property type="entry name" value="PRK14276.1"/>
    <property type="match status" value="1"/>
</dbReference>
<dbReference type="NCBIfam" id="NF010873">
    <property type="entry name" value="PRK14280.1"/>
    <property type="match status" value="1"/>
</dbReference>
<dbReference type="PANTHER" id="PTHR43096:SF48">
    <property type="entry name" value="CHAPERONE PROTEIN DNAJ"/>
    <property type="match status" value="1"/>
</dbReference>
<dbReference type="PANTHER" id="PTHR43096">
    <property type="entry name" value="DNAJ HOMOLOG 1, MITOCHONDRIAL-RELATED"/>
    <property type="match status" value="1"/>
</dbReference>
<dbReference type="Pfam" id="PF00226">
    <property type="entry name" value="DnaJ"/>
    <property type="match status" value="1"/>
</dbReference>
<dbReference type="Pfam" id="PF01556">
    <property type="entry name" value="DnaJ_C"/>
    <property type="match status" value="1"/>
</dbReference>
<dbReference type="Pfam" id="PF00684">
    <property type="entry name" value="DnaJ_CXXCXGXG"/>
    <property type="match status" value="1"/>
</dbReference>
<dbReference type="PRINTS" id="PR00625">
    <property type="entry name" value="JDOMAIN"/>
</dbReference>
<dbReference type="SMART" id="SM00271">
    <property type="entry name" value="DnaJ"/>
    <property type="match status" value="1"/>
</dbReference>
<dbReference type="SUPFAM" id="SSF46565">
    <property type="entry name" value="Chaperone J-domain"/>
    <property type="match status" value="1"/>
</dbReference>
<dbReference type="SUPFAM" id="SSF57938">
    <property type="entry name" value="DnaJ/Hsp40 cysteine-rich domain"/>
    <property type="match status" value="1"/>
</dbReference>
<dbReference type="SUPFAM" id="SSF49493">
    <property type="entry name" value="HSP40/DnaJ peptide-binding domain"/>
    <property type="match status" value="2"/>
</dbReference>
<dbReference type="PROSITE" id="PS00636">
    <property type="entry name" value="DNAJ_1"/>
    <property type="match status" value="1"/>
</dbReference>
<dbReference type="PROSITE" id="PS50076">
    <property type="entry name" value="DNAJ_2"/>
    <property type="match status" value="1"/>
</dbReference>
<dbReference type="PROSITE" id="PS51188">
    <property type="entry name" value="ZF_CR"/>
    <property type="match status" value="1"/>
</dbReference>
<proteinExistence type="inferred from homology"/>